<dbReference type="EC" id="6.3.2.4" evidence="2"/>
<dbReference type="EMBL" id="CP000814">
    <property type="protein sequence ID" value="ABV52348.1"/>
    <property type="molecule type" value="Genomic_DNA"/>
</dbReference>
<dbReference type="RefSeq" id="WP_002866926.1">
    <property type="nucleotide sequence ID" value="NC_009839.1"/>
</dbReference>
<dbReference type="SMR" id="A8FLL1"/>
<dbReference type="KEGG" id="cju:C8J_0749"/>
<dbReference type="HOGENOM" id="CLU_039268_0_2_7"/>
<dbReference type="UniPathway" id="UPA00219"/>
<dbReference type="GO" id="GO:0005737">
    <property type="term" value="C:cytoplasm"/>
    <property type="evidence" value="ECO:0007669"/>
    <property type="project" value="UniProtKB-SubCell"/>
</dbReference>
<dbReference type="GO" id="GO:0005524">
    <property type="term" value="F:ATP binding"/>
    <property type="evidence" value="ECO:0007669"/>
    <property type="project" value="UniProtKB-KW"/>
</dbReference>
<dbReference type="GO" id="GO:0008716">
    <property type="term" value="F:D-alanine-D-alanine ligase activity"/>
    <property type="evidence" value="ECO:0007669"/>
    <property type="project" value="UniProtKB-UniRule"/>
</dbReference>
<dbReference type="GO" id="GO:0046872">
    <property type="term" value="F:metal ion binding"/>
    <property type="evidence" value="ECO:0007669"/>
    <property type="project" value="UniProtKB-KW"/>
</dbReference>
<dbReference type="GO" id="GO:0071555">
    <property type="term" value="P:cell wall organization"/>
    <property type="evidence" value="ECO:0007669"/>
    <property type="project" value="UniProtKB-KW"/>
</dbReference>
<dbReference type="GO" id="GO:0009252">
    <property type="term" value="P:peptidoglycan biosynthetic process"/>
    <property type="evidence" value="ECO:0007669"/>
    <property type="project" value="UniProtKB-UniRule"/>
</dbReference>
<dbReference type="GO" id="GO:0008360">
    <property type="term" value="P:regulation of cell shape"/>
    <property type="evidence" value="ECO:0007669"/>
    <property type="project" value="UniProtKB-KW"/>
</dbReference>
<dbReference type="Gene3D" id="3.40.50.20">
    <property type="match status" value="1"/>
</dbReference>
<dbReference type="Gene3D" id="3.30.1490.20">
    <property type="entry name" value="ATP-grasp fold, A domain"/>
    <property type="match status" value="1"/>
</dbReference>
<dbReference type="Gene3D" id="3.30.470.20">
    <property type="entry name" value="ATP-grasp fold, B domain"/>
    <property type="match status" value="1"/>
</dbReference>
<dbReference type="HAMAP" id="MF_00047">
    <property type="entry name" value="Dala_Dala_lig"/>
    <property type="match status" value="1"/>
</dbReference>
<dbReference type="InterPro" id="IPR011761">
    <property type="entry name" value="ATP-grasp"/>
</dbReference>
<dbReference type="InterPro" id="IPR013815">
    <property type="entry name" value="ATP_grasp_subdomain_1"/>
</dbReference>
<dbReference type="InterPro" id="IPR000291">
    <property type="entry name" value="D-Ala_lig_Van_CS"/>
</dbReference>
<dbReference type="InterPro" id="IPR005905">
    <property type="entry name" value="D_ala_D_ala"/>
</dbReference>
<dbReference type="InterPro" id="IPR011095">
    <property type="entry name" value="Dala_Dala_lig_C"/>
</dbReference>
<dbReference type="InterPro" id="IPR011127">
    <property type="entry name" value="Dala_Dala_lig_N"/>
</dbReference>
<dbReference type="InterPro" id="IPR016185">
    <property type="entry name" value="PreATP-grasp_dom_sf"/>
</dbReference>
<dbReference type="NCBIfam" id="TIGR01205">
    <property type="entry name" value="D_ala_D_alaTIGR"/>
    <property type="match status" value="1"/>
</dbReference>
<dbReference type="NCBIfam" id="NF002527">
    <property type="entry name" value="PRK01966.1-3"/>
    <property type="match status" value="1"/>
</dbReference>
<dbReference type="PANTHER" id="PTHR23132">
    <property type="entry name" value="D-ALANINE--D-ALANINE LIGASE"/>
    <property type="match status" value="1"/>
</dbReference>
<dbReference type="PANTHER" id="PTHR23132:SF23">
    <property type="entry name" value="D-ALANINE--D-ALANINE LIGASE B"/>
    <property type="match status" value="1"/>
</dbReference>
<dbReference type="Pfam" id="PF07478">
    <property type="entry name" value="Dala_Dala_lig_C"/>
    <property type="match status" value="1"/>
</dbReference>
<dbReference type="Pfam" id="PF01820">
    <property type="entry name" value="Dala_Dala_lig_N"/>
    <property type="match status" value="1"/>
</dbReference>
<dbReference type="SUPFAM" id="SSF56059">
    <property type="entry name" value="Glutathione synthetase ATP-binding domain-like"/>
    <property type="match status" value="1"/>
</dbReference>
<dbReference type="SUPFAM" id="SSF52440">
    <property type="entry name" value="PreATP-grasp domain"/>
    <property type="match status" value="1"/>
</dbReference>
<dbReference type="PROSITE" id="PS50975">
    <property type="entry name" value="ATP_GRASP"/>
    <property type="match status" value="1"/>
</dbReference>
<dbReference type="PROSITE" id="PS00843">
    <property type="entry name" value="DALA_DALA_LIGASE_1"/>
    <property type="match status" value="1"/>
</dbReference>
<dbReference type="PROSITE" id="PS00844">
    <property type="entry name" value="DALA_DALA_LIGASE_2"/>
    <property type="match status" value="1"/>
</dbReference>
<feature type="chain" id="PRO_1000074765" description="D-alanine--D-alanine ligase">
    <location>
        <begin position="1"/>
        <end position="346"/>
    </location>
</feature>
<feature type="domain" description="ATP-grasp" evidence="2">
    <location>
        <begin position="133"/>
        <end position="327"/>
    </location>
</feature>
<feature type="binding site" evidence="2">
    <location>
        <begin position="159"/>
        <end position="211"/>
    </location>
    <ligand>
        <name>ATP</name>
        <dbReference type="ChEBI" id="CHEBI:30616"/>
    </ligand>
</feature>
<feature type="binding site" evidence="2">
    <location>
        <position position="284"/>
    </location>
    <ligand>
        <name>Mg(2+)</name>
        <dbReference type="ChEBI" id="CHEBI:18420"/>
        <label>1</label>
    </ligand>
</feature>
<feature type="binding site" evidence="2">
    <location>
        <position position="296"/>
    </location>
    <ligand>
        <name>Mg(2+)</name>
        <dbReference type="ChEBI" id="CHEBI:18420"/>
        <label>1</label>
    </ligand>
</feature>
<feature type="binding site" evidence="2">
    <location>
        <position position="296"/>
    </location>
    <ligand>
        <name>Mg(2+)</name>
        <dbReference type="ChEBI" id="CHEBI:18420"/>
        <label>2</label>
    </ligand>
</feature>
<feature type="binding site" evidence="2">
    <location>
        <position position="298"/>
    </location>
    <ligand>
        <name>Mg(2+)</name>
        <dbReference type="ChEBI" id="CHEBI:18420"/>
        <label>2</label>
    </ligand>
</feature>
<reference key="1">
    <citation type="journal article" date="2007" name="J. Bacteriol.">
        <title>The complete genome sequence of Campylobacter jejuni strain 81116 (NCTC11828).</title>
        <authorList>
            <person name="Pearson B.M."/>
            <person name="Gaskin D.J.H."/>
            <person name="Segers R.P.A.M."/>
            <person name="Wells J.M."/>
            <person name="Nuijten P.J.M."/>
            <person name="van Vliet A.H.M."/>
        </authorList>
    </citation>
    <scope>NUCLEOTIDE SEQUENCE [LARGE SCALE GENOMIC DNA]</scope>
    <source>
        <strain>81116 / NCTC 11828</strain>
    </source>
</reference>
<sequence>MKFAILFGGNSYEHEISIVSAVVLKKVINQNLEFVFCDEERRFYHIPSEKMNSKTFSTKAYKNEKELFIKQGGFFSKGFLKENKLECECVINLIHGRDGEDGKIAALFEFYSIKFIGPRLEASVLSFNKELTKLYAKSVGVKTLDYTMLRKNQNSKEKLSFPCIIKPARLGSSIGISIVKDEKDLEYAKDVGFEFDNDLVVEEFKNNIKEYNLAGCMINDEFVFSIIEEPKKKEFLDFEQKYLSFSGHNELIEADLSEELKEKLKDSFKKIYNPLFKGALIRCDFFILDNEVYLNEINPNPGSLANYLFKDFNTTLNALADQISLEKMIKINYNFLHSINGQKGKL</sequence>
<name>DDL_CAMJ8</name>
<proteinExistence type="inferred from homology"/>
<comment type="function">
    <text evidence="2">Cell wall formation.</text>
</comment>
<comment type="catalytic activity">
    <reaction evidence="2">
        <text>2 D-alanine + ATP = D-alanyl-D-alanine + ADP + phosphate + H(+)</text>
        <dbReference type="Rhea" id="RHEA:11224"/>
        <dbReference type="ChEBI" id="CHEBI:15378"/>
        <dbReference type="ChEBI" id="CHEBI:30616"/>
        <dbReference type="ChEBI" id="CHEBI:43474"/>
        <dbReference type="ChEBI" id="CHEBI:57416"/>
        <dbReference type="ChEBI" id="CHEBI:57822"/>
        <dbReference type="ChEBI" id="CHEBI:456216"/>
        <dbReference type="EC" id="6.3.2.4"/>
    </reaction>
</comment>
<comment type="cofactor">
    <cofactor evidence="1">
        <name>Mg(2+)</name>
        <dbReference type="ChEBI" id="CHEBI:18420"/>
    </cofactor>
    <cofactor evidence="1">
        <name>Mn(2+)</name>
        <dbReference type="ChEBI" id="CHEBI:29035"/>
    </cofactor>
    <text evidence="1">Binds 2 magnesium or manganese ions per subunit.</text>
</comment>
<comment type="pathway">
    <text evidence="2">Cell wall biogenesis; peptidoglycan biosynthesis.</text>
</comment>
<comment type="subcellular location">
    <subcellularLocation>
        <location evidence="2">Cytoplasm</location>
    </subcellularLocation>
</comment>
<comment type="similarity">
    <text evidence="2">Belongs to the D-alanine--D-alanine ligase family.</text>
</comment>
<keyword id="KW-0067">ATP-binding</keyword>
<keyword id="KW-0133">Cell shape</keyword>
<keyword id="KW-0961">Cell wall biogenesis/degradation</keyword>
<keyword id="KW-0963">Cytoplasm</keyword>
<keyword id="KW-0436">Ligase</keyword>
<keyword id="KW-0460">Magnesium</keyword>
<keyword id="KW-0464">Manganese</keyword>
<keyword id="KW-0479">Metal-binding</keyword>
<keyword id="KW-0547">Nucleotide-binding</keyword>
<keyword id="KW-0573">Peptidoglycan synthesis</keyword>
<accession>A8FLL1</accession>
<organism>
    <name type="scientific">Campylobacter jejuni subsp. jejuni serotype O:6 (strain 81116 / NCTC 11828)</name>
    <dbReference type="NCBI Taxonomy" id="407148"/>
    <lineage>
        <taxon>Bacteria</taxon>
        <taxon>Pseudomonadati</taxon>
        <taxon>Campylobacterota</taxon>
        <taxon>Epsilonproteobacteria</taxon>
        <taxon>Campylobacterales</taxon>
        <taxon>Campylobacteraceae</taxon>
        <taxon>Campylobacter</taxon>
    </lineage>
</organism>
<protein>
    <recommendedName>
        <fullName evidence="2">D-alanine--D-alanine ligase</fullName>
        <ecNumber evidence="2">6.3.2.4</ecNumber>
    </recommendedName>
    <alternativeName>
        <fullName evidence="2">D-Ala-D-Ala ligase</fullName>
    </alternativeName>
    <alternativeName>
        <fullName evidence="2">D-alanylalanine synthetase</fullName>
    </alternativeName>
</protein>
<evidence type="ECO:0000250" key="1"/>
<evidence type="ECO:0000255" key="2">
    <source>
        <dbReference type="HAMAP-Rule" id="MF_00047"/>
    </source>
</evidence>
<gene>
    <name evidence="2" type="primary">ddl</name>
    <name type="ordered locus">C8J_0749</name>
</gene>